<gene>
    <name type="primary">BRCA1</name>
</gene>
<evidence type="ECO:0000250" key="1"/>
<evidence type="ECO:0000250" key="2">
    <source>
        <dbReference type="UniProtKB" id="P38398"/>
    </source>
</evidence>
<evidence type="ECO:0000250" key="3">
    <source>
        <dbReference type="UniProtKB" id="P48754"/>
    </source>
</evidence>
<evidence type="ECO:0000255" key="4">
    <source>
        <dbReference type="PROSITE-ProRule" id="PRU00033"/>
    </source>
</evidence>
<evidence type="ECO:0000255" key="5">
    <source>
        <dbReference type="PROSITE-ProRule" id="PRU00175"/>
    </source>
</evidence>
<evidence type="ECO:0000256" key="6">
    <source>
        <dbReference type="SAM" id="MobiDB-lite"/>
    </source>
</evidence>
<evidence type="ECO:0000305" key="7"/>
<sequence>MDLSAVRVEEVQNVINAMQKILECPICLELIKEPVSTKCDHIFCKFCMLKLLNQKKGPSQCPLCKNDITKRSLQESTRFSQLVEELLKIICAFQLDTGLQYANSYNFAKKENNSPEHLKDEVSIIQSMGYRNRAKRLLQSEPENPSLQETSPSVQLSNLGTVRTLRTKQRIQPQKKSVYIELGSDSSEDTVNKATYCSVGDQELLQITPQGTSDEISLDSAKKAACEFSETDVTNTEHHQPSNNDLNTTEKRATERHPEKYQGSSVSNLHVEPCGTNTHASSLQHENSSLLLTKDRMNVEKAEFCNKSKQPGLARSQHNRWAGSKETCNDRQTPSTEKKVDLNADPLCERKEWNKQKLPCSENPRDTEDVPWITLNSSIQKVNEWFSRSDELLGSDDSHDGRSESNAKVADVLDVLNEVDEYSGSSEKIDLLASDPHEALICKSERVHSKSVESNIEDKIFGKTYRRKASLPNLSHVTENLIIGAFVTEPQIIQERPLTNKLKRKRRATSGLHPEDFIKKADLAVQKTPEMINQGTNQMEQNGQVMNITNSGHENKTKGDSIQNEKNPNPIESLEKESAFKTKAEPISSSISNMELELNIHNSKAPKKNRLRRKSSTRHIHALELVVSRNLSPPNCTELQIDSCSSSEEIKKKKYNQMPVRHSRNLQLMEDKEPATGAKKSNKPNEQTSKRHDSDTFPELKLTNAPGSFTNCSNTSELKEFVNPSLPREEKEEKLGTVKVSNNAKDPKDLMLSGERVLQTERSVESSSISLVPGTDYGTQESISLLEVSTLGKAKTEPNKCVSQCAAFENPKELIHGCFKDTRNDTEGFKYPLGHEVNHSQETSIEMEESELDTQYLQNTFKVSKRQSFALFSNPGNPEEECATFSAHSRSLKKQSPKVTFECEQKEENQGKNESNIKPVQTANITAGFPVVCQKDKPVDYAKCSIKGGSRFCLSSQFRGNETGLITPNKHGLSQNPYHIPPLFPIKSFVKTKCKKNLLEENSEEHSMSPEREMGNENIPSTVSIISRNNIRENVFKEASSSNINEVGSSTNEVGSSINEVGSSDENIQAELGRSRGPKLNAMLRLGVLQPEVYKQSFPGSNGKHPEIKKQEYEEVLQTVNTDFSPCLISDNLEQPMRSSHASQVCSETPNDLLDDGEIKEDTSFAENDIKESSAVFSKSVQRGELSRSPSPFTHTHLAQGYRRGAKKLESSEENLSSEDEELPCFQHLLFGKVSNIPSQSTRHSTVATECLSKNTEENLLSLKNSLNDYSNQVILVKASQEHHLSEETKCSASLFSSQCSELEDLTANTNTQDRFFIGSSKQMRHQSESQGVGLSDKELVSDDEERGTDLEENNQEEQGVDSNLGEAASGYESETSVSEDCSGLSSQSDILTTQQRDTMQDNLIKLQQEMAELEAVLEQHGSQPSNSYPSIISDSSALEDLRNPEQSTSEKAVLTSQKSSEYPISQNPEGLSADKFEVSADSSTNKNKEPGVERSSPSKCPSLDDRWYMHSCSGSLQNGNYPSQEELIKVVDVEKQQLEESGPHDLTEPSYLPRQDLEGTPYLESGISLFSDDPESDASEDRAPESAHVGSIPSSTSALKVPQLKVAESAQSPAAAQTTNTAGYNAMEESVSREKPELTASTERVNKRMSMVVSGLTPEEFMLVYKFARKHHITLTNLITEETTHVVMKTDAEFVCERTLKYFLGIAGGKWVVSYFWVTQSIKERKMLNEHDFEVRGDVVNGRNHQGPKRARESQDRKIFRGLEICCYGPFTNMPTDQLEWIVQLCGASVVKELSSFTLGTGVHPIVVVQPDAWTEDNGFHAIGQMCEAPVVTREWVLDSVALYQCQELDTYLIPQIPHSHY</sequence>
<reference key="1">
    <citation type="journal article" date="2004" name="Hum. Mol. Genet.">
        <title>Evolution of the tumor suppressor BRCA1 locus in primates: implications for cancer predisposition.</title>
        <authorList>
            <person name="Pavlicek A."/>
            <person name="Noskov V.N."/>
            <person name="Kouprina N."/>
            <person name="Barrett J.C."/>
            <person name="Jurka J."/>
            <person name="Larionov V."/>
        </authorList>
    </citation>
    <scope>NUCLEOTIDE SEQUENCE [GENOMIC DNA]</scope>
</reference>
<reference key="2">
    <citation type="journal article" date="1998" name="Nat. Genet.">
        <title>Evolutionary sequence comparisons using high-density oligonucleotide arrays.</title>
        <authorList>
            <person name="Hacia J.G."/>
            <person name="Makalowski W."/>
            <person name="Edgemon K."/>
            <person name="Erdos M.R."/>
            <person name="Robbins C.M."/>
            <person name="Fodor S.P.A."/>
            <person name="Brody L.C."/>
            <person name="Collins F.S."/>
        </authorList>
    </citation>
    <scope>NUCLEOTIDE SEQUENCE [GENOMIC DNA] OF 225-1365</scope>
</reference>
<name>BRCA1_PONPY</name>
<feature type="chain" id="PRO_0000055834" description="Breast cancer type 1 susceptibility protein homolog">
    <location>
        <begin position="1"/>
        <end position="1863"/>
    </location>
</feature>
<feature type="domain" description="BRCT 1" evidence="4">
    <location>
        <begin position="1642"/>
        <end position="1736"/>
    </location>
</feature>
<feature type="domain" description="BRCT 2" evidence="4">
    <location>
        <begin position="1756"/>
        <end position="1855"/>
    </location>
</feature>
<feature type="zinc finger region" description="RING-type" evidence="5">
    <location>
        <begin position="24"/>
        <end position="65"/>
    </location>
</feature>
<feature type="region of interest" description="Disordered" evidence="6">
    <location>
        <begin position="231"/>
        <end position="267"/>
    </location>
</feature>
<feature type="region of interest" description="Disordered" evidence="6">
    <location>
        <begin position="306"/>
        <end position="338"/>
    </location>
</feature>
<feature type="region of interest" description="Disordered" evidence="6">
    <location>
        <begin position="650"/>
        <end position="735"/>
    </location>
</feature>
<feature type="region of interest" description="Disordered" evidence="6">
    <location>
        <begin position="1045"/>
        <end position="1066"/>
    </location>
</feature>
<feature type="region of interest" description="Disordered" evidence="6">
    <location>
        <begin position="1181"/>
        <end position="1216"/>
    </location>
</feature>
<feature type="region of interest" description="Disordered" evidence="6">
    <location>
        <begin position="1322"/>
        <end position="1394"/>
    </location>
</feature>
<feature type="region of interest" description="Interaction with PALB2" evidence="1">
    <location>
        <begin position="1397"/>
        <end position="1424"/>
    </location>
</feature>
<feature type="region of interest" description="Disordered" evidence="6">
    <location>
        <begin position="1440"/>
        <end position="1504"/>
    </location>
</feature>
<feature type="region of interest" description="Disordered" evidence="6">
    <location>
        <begin position="1540"/>
        <end position="1597"/>
    </location>
</feature>
<feature type="region of interest" description="Disordered" evidence="6">
    <location>
        <begin position="1610"/>
        <end position="1642"/>
    </location>
</feature>
<feature type="compositionally biased region" description="Basic and acidic residues" evidence="6">
    <location>
        <begin position="248"/>
        <end position="260"/>
    </location>
</feature>
<feature type="compositionally biased region" description="Polar residues" evidence="6">
    <location>
        <begin position="705"/>
        <end position="716"/>
    </location>
</feature>
<feature type="compositionally biased region" description="Acidic residues" evidence="6">
    <location>
        <begin position="1342"/>
        <end position="1360"/>
    </location>
</feature>
<feature type="compositionally biased region" description="Polar residues" evidence="6">
    <location>
        <begin position="1373"/>
        <end position="1394"/>
    </location>
</feature>
<feature type="compositionally biased region" description="Polar residues" evidence="6">
    <location>
        <begin position="1445"/>
        <end position="1470"/>
    </location>
</feature>
<feature type="compositionally biased region" description="Polar residues" evidence="6">
    <location>
        <begin position="1610"/>
        <end position="1624"/>
    </location>
</feature>
<feature type="modified residue" description="N-acetylmethionine" evidence="2">
    <location>
        <position position="1"/>
    </location>
</feature>
<feature type="modified residue" description="Phosphoserine" evidence="2">
    <location>
        <position position="114"/>
    </location>
</feature>
<feature type="modified residue" description="Phosphoserine" evidence="2">
    <location>
        <position position="395"/>
    </location>
</feature>
<feature type="modified residue" description="Phosphoserine" evidence="2">
    <location>
        <position position="398"/>
    </location>
</feature>
<feature type="modified residue" description="Phosphoserine" evidence="2">
    <location>
        <position position="423"/>
    </location>
</feature>
<feature type="modified residue" description="Phosphoserine" evidence="2">
    <location>
        <position position="434"/>
    </location>
</feature>
<feature type="modified residue" description="Phosphoserine" evidence="2">
    <location>
        <position position="551"/>
    </location>
</feature>
<feature type="modified residue" description="Phosphoserine" evidence="2">
    <location>
        <position position="694"/>
    </location>
</feature>
<feature type="modified residue" description="Phosphoserine" evidence="2">
    <location>
        <position position="708"/>
    </location>
</feature>
<feature type="modified residue" description="Phosphoserine" evidence="3">
    <location>
        <position position="725"/>
    </location>
</feature>
<feature type="modified residue" description="Phosphoserine" evidence="2">
    <location>
        <position position="753"/>
    </location>
</feature>
<feature type="modified residue" description="Phosphoserine" evidence="3">
    <location>
        <position position="840"/>
    </location>
</feature>
<feature type="modified residue" description="Phosphoserine; by CHEK2" evidence="2">
    <location>
        <position position="988"/>
    </location>
</feature>
<feature type="modified residue" description="Phosphoserine" evidence="2">
    <location>
        <position position="1009"/>
    </location>
</feature>
<feature type="modified residue" description="Phosphoserine" evidence="2">
    <location>
        <position position="1143"/>
    </location>
</feature>
<feature type="modified residue" description="Phosphoserine" evidence="2">
    <location>
        <position position="1189"/>
    </location>
</feature>
<feature type="modified residue" description="Phosphoserine" evidence="2">
    <location>
        <position position="1191"/>
    </location>
</feature>
<feature type="modified residue" description="Phosphoserine" evidence="2">
    <location>
        <position position="1211"/>
    </location>
</feature>
<feature type="modified residue" description="Phosphoserine" evidence="2">
    <location>
        <position position="1217"/>
    </location>
</feature>
<feature type="modified residue" description="Phosphoserine" evidence="2">
    <location>
        <position position="1218"/>
    </location>
</feature>
<feature type="modified residue" description="Phosphoserine" evidence="2">
    <location>
        <position position="1280"/>
    </location>
</feature>
<feature type="modified residue" description="Phosphoserine" evidence="2">
    <location>
        <position position="1328"/>
    </location>
</feature>
<feature type="modified residue" description="Phosphoserine" evidence="2">
    <location>
        <position position="1336"/>
    </location>
</feature>
<feature type="modified residue" description="Phosphoserine" evidence="2">
    <location>
        <position position="1342"/>
    </location>
</feature>
<feature type="modified residue" description="Phosphoserine" evidence="2">
    <location>
        <position position="1387"/>
    </location>
</feature>
<feature type="modified residue" description="Phosphothreonine" evidence="2">
    <location>
        <position position="1394"/>
    </location>
</feature>
<feature type="modified residue" description="Phosphoserine" evidence="2">
    <location>
        <position position="1423"/>
    </location>
</feature>
<feature type="modified residue" description="Phosphoserine" evidence="2">
    <location>
        <position position="1457"/>
    </location>
</feature>
<feature type="modified residue" description="Phosphoserine" evidence="2">
    <location>
        <position position="1524"/>
    </location>
</feature>
<feature type="modified residue" description="Phosphoserine" evidence="2">
    <location>
        <position position="1542"/>
    </location>
</feature>
<feature type="cross-link" description="Glycyl lysine isopeptide (Lys-Gly) (interchain with G-Cter in SUMO2)" evidence="2">
    <location>
        <position position="109"/>
    </location>
</feature>
<feature type="cross-link" description="Glycyl lysine isopeptide (Lys-Gly) (interchain with G-Cter in SUMO2)" evidence="2">
    <location>
        <position position="301"/>
    </location>
</feature>
<feature type="cross-link" description="Glycyl lysine isopeptide (Lys-Gly) (interchain with G-Cter in SUMO2)" evidence="2">
    <location>
        <position position="339"/>
    </location>
</feature>
<feature type="cross-link" description="Glycyl lysine isopeptide (Lys-Gly) (interchain with G-Cter in SUMO2)" evidence="2">
    <location>
        <position position="443"/>
    </location>
</feature>
<feature type="cross-link" description="Glycyl lysine isopeptide (Lys-Gly) (interchain with G-Cter in SUMO2)" evidence="2">
    <location>
        <position position="459"/>
    </location>
</feature>
<feature type="cross-link" description="Glycyl lysine isopeptide (Lys-Gly) (interchain with G-Cter in SUMO2)" evidence="2">
    <location>
        <position position="519"/>
    </location>
</feature>
<feature type="cross-link" description="Glycyl lysine isopeptide (Lys-Gly) (interchain with G-Cter in SUMO2)" evidence="2">
    <location>
        <position position="583"/>
    </location>
</feature>
<feature type="cross-link" description="Glycyl lysine isopeptide (Lys-Gly) (interchain with G-Cter in SUMO2)" evidence="2">
    <location>
        <position position="654"/>
    </location>
</feature>
<feature type="cross-link" description="Glycyl lysine isopeptide (Lys-Gly) (interchain with G-Cter in SUMO2)" evidence="2">
    <location>
        <position position="734"/>
    </location>
</feature>
<feature type="cross-link" description="Glycyl lysine isopeptide (Lys-Gly) (interchain with G-Cter in SUMO2)" evidence="2">
    <location>
        <position position="739"/>
    </location>
</feature>
<feature type="cross-link" description="Glycyl lysine isopeptide (Lys-Gly) (interchain with G-Cter in SUMO2)" evidence="2">
    <location>
        <position position="918"/>
    </location>
</feature>
<feature type="cross-link" description="Glycyl lysine isopeptide (Lys-Gly) (interchain with G-Cter in SUMO2)" evidence="2">
    <location>
        <position position="987"/>
    </location>
</feature>
<feature type="cross-link" description="Glycyl lysine isopeptide (Lys-Gly) (interchain with G-Cter in SUMO2)" evidence="2">
    <location>
        <position position="1079"/>
    </location>
</feature>
<feature type="sequence conflict" description="In Ref. 2; AAC39585." evidence="7" ref="2">
    <original>E</original>
    <variation>G</variation>
    <location>
        <position position="755"/>
    </location>
</feature>
<keyword id="KW-0007">Acetylation</keyword>
<keyword id="KW-0010">Activator</keyword>
<keyword id="KW-0131">Cell cycle</keyword>
<keyword id="KW-0158">Chromosome</keyword>
<keyword id="KW-0963">Cytoplasm</keyword>
<keyword id="KW-0227">DNA damage</keyword>
<keyword id="KW-0233">DNA recombination</keyword>
<keyword id="KW-0234">DNA repair</keyword>
<keyword id="KW-0238">DNA-binding</keyword>
<keyword id="KW-0275">Fatty acid biosynthesis</keyword>
<keyword id="KW-0276">Fatty acid metabolism</keyword>
<keyword id="KW-1017">Isopeptide bond</keyword>
<keyword id="KW-0444">Lipid biosynthesis</keyword>
<keyword id="KW-0443">Lipid metabolism</keyword>
<keyword id="KW-0479">Metal-binding</keyword>
<keyword id="KW-0539">Nucleus</keyword>
<keyword id="KW-0597">Phosphoprotein</keyword>
<keyword id="KW-0677">Repeat</keyword>
<keyword id="KW-0804">Transcription</keyword>
<keyword id="KW-0805">Transcription regulation</keyword>
<keyword id="KW-0808">Transferase</keyword>
<keyword id="KW-0043">Tumor suppressor</keyword>
<keyword id="KW-0832">Ubl conjugation</keyword>
<keyword id="KW-0833">Ubl conjugation pathway</keyword>
<keyword id="KW-0862">Zinc</keyword>
<keyword id="KW-0863">Zinc-finger</keyword>
<dbReference type="EC" id="2.3.2.27" evidence="2"/>
<dbReference type="EMBL" id="AY589040">
    <property type="protein sequence ID" value="AAT44834.1"/>
    <property type="molecule type" value="Genomic_DNA"/>
</dbReference>
<dbReference type="EMBL" id="AF019077">
    <property type="protein sequence ID" value="AAC39585.1"/>
    <property type="molecule type" value="Genomic_DNA"/>
</dbReference>
<dbReference type="BMRB" id="Q6J6J0"/>
<dbReference type="SMR" id="Q6J6J0"/>
<dbReference type="UniPathway" id="UPA00143"/>
<dbReference type="GO" id="GO:0070531">
    <property type="term" value="C:BRCA1-A complex"/>
    <property type="evidence" value="ECO:0007669"/>
    <property type="project" value="TreeGrafter"/>
</dbReference>
<dbReference type="GO" id="GO:0031436">
    <property type="term" value="C:BRCA1-BARD1 complex"/>
    <property type="evidence" value="ECO:0000250"/>
    <property type="project" value="UniProtKB"/>
</dbReference>
<dbReference type="GO" id="GO:0005694">
    <property type="term" value="C:chromosome"/>
    <property type="evidence" value="ECO:0000250"/>
    <property type="project" value="UniProtKB"/>
</dbReference>
<dbReference type="GO" id="GO:0005737">
    <property type="term" value="C:cytoplasm"/>
    <property type="evidence" value="ECO:0000250"/>
    <property type="project" value="UniProtKB"/>
</dbReference>
<dbReference type="GO" id="GO:0005634">
    <property type="term" value="C:nucleus"/>
    <property type="evidence" value="ECO:0000250"/>
    <property type="project" value="UniProtKB"/>
</dbReference>
<dbReference type="GO" id="GO:0003677">
    <property type="term" value="F:DNA binding"/>
    <property type="evidence" value="ECO:0007669"/>
    <property type="project" value="UniProtKB-KW"/>
</dbReference>
<dbReference type="GO" id="GO:0070063">
    <property type="term" value="F:RNA polymerase binding"/>
    <property type="evidence" value="ECO:0000250"/>
    <property type="project" value="UniProtKB"/>
</dbReference>
<dbReference type="GO" id="GO:0003713">
    <property type="term" value="F:transcription coactivator activity"/>
    <property type="evidence" value="ECO:0000250"/>
    <property type="project" value="UniProtKB"/>
</dbReference>
<dbReference type="GO" id="GO:0004842">
    <property type="term" value="F:ubiquitin-protein transferase activity"/>
    <property type="evidence" value="ECO:0000250"/>
    <property type="project" value="UniProtKB"/>
</dbReference>
<dbReference type="GO" id="GO:0008270">
    <property type="term" value="F:zinc ion binding"/>
    <property type="evidence" value="ECO:0007669"/>
    <property type="project" value="UniProtKB-KW"/>
</dbReference>
<dbReference type="GO" id="GO:0043009">
    <property type="term" value="P:chordate embryonic development"/>
    <property type="evidence" value="ECO:0007669"/>
    <property type="project" value="TreeGrafter"/>
</dbReference>
<dbReference type="GO" id="GO:0000724">
    <property type="term" value="P:double-strand break repair via homologous recombination"/>
    <property type="evidence" value="ECO:0007669"/>
    <property type="project" value="TreeGrafter"/>
</dbReference>
<dbReference type="GO" id="GO:0006633">
    <property type="term" value="P:fatty acid biosynthetic process"/>
    <property type="evidence" value="ECO:0007669"/>
    <property type="project" value="UniProtKB-KW"/>
</dbReference>
<dbReference type="GO" id="GO:0007095">
    <property type="term" value="P:mitotic G2 DNA damage checkpoint signaling"/>
    <property type="evidence" value="ECO:0007669"/>
    <property type="project" value="TreeGrafter"/>
</dbReference>
<dbReference type="GO" id="GO:0045717">
    <property type="term" value="P:negative regulation of fatty acid biosynthetic process"/>
    <property type="evidence" value="ECO:0000250"/>
    <property type="project" value="UniProtKB"/>
</dbReference>
<dbReference type="GO" id="GO:0045893">
    <property type="term" value="P:positive regulation of DNA-templated transcription"/>
    <property type="evidence" value="ECO:0000250"/>
    <property type="project" value="UniProtKB"/>
</dbReference>
<dbReference type="GO" id="GO:0045944">
    <property type="term" value="P:positive regulation of transcription by RNA polymerase II"/>
    <property type="evidence" value="ECO:0007669"/>
    <property type="project" value="TreeGrafter"/>
</dbReference>
<dbReference type="GO" id="GO:0051865">
    <property type="term" value="P:protein autoubiquitination"/>
    <property type="evidence" value="ECO:0000250"/>
    <property type="project" value="UniProtKB"/>
</dbReference>
<dbReference type="GO" id="GO:0085020">
    <property type="term" value="P:protein K6-linked ubiquitination"/>
    <property type="evidence" value="ECO:0000250"/>
    <property type="project" value="UniProtKB"/>
</dbReference>
<dbReference type="GO" id="GO:0006357">
    <property type="term" value="P:regulation of transcription by RNA polymerase II"/>
    <property type="evidence" value="ECO:0000250"/>
    <property type="project" value="UniProtKB"/>
</dbReference>
<dbReference type="GO" id="GO:0007549">
    <property type="term" value="P:sex-chromosome dosage compensation"/>
    <property type="evidence" value="ECO:0007669"/>
    <property type="project" value="TreeGrafter"/>
</dbReference>
<dbReference type="CDD" id="cd17735">
    <property type="entry name" value="BRCT_BRCA1_rpt1"/>
    <property type="match status" value="1"/>
</dbReference>
<dbReference type="CDD" id="cd17721">
    <property type="entry name" value="BRCT_BRCA1_rpt2"/>
    <property type="match status" value="1"/>
</dbReference>
<dbReference type="CDD" id="cd16498">
    <property type="entry name" value="RING-HC_BRCA1"/>
    <property type="match status" value="1"/>
</dbReference>
<dbReference type="FunFam" id="3.30.40.10:FF:000213">
    <property type="entry name" value="Breast cancer type 1 susceptibility protein homolog"/>
    <property type="match status" value="1"/>
</dbReference>
<dbReference type="FunFam" id="3.40.50.10190:FF:000006">
    <property type="entry name" value="Breast cancer type 1 susceptibility protein homolog"/>
    <property type="match status" value="1"/>
</dbReference>
<dbReference type="FunFam" id="3.40.50.10190:FF:000025">
    <property type="entry name" value="Breast cancer type 1 susceptibility protein homolog"/>
    <property type="match status" value="1"/>
</dbReference>
<dbReference type="Gene3D" id="3.40.50.10190">
    <property type="entry name" value="BRCT domain"/>
    <property type="match status" value="2"/>
</dbReference>
<dbReference type="Gene3D" id="3.30.40.10">
    <property type="entry name" value="Zinc/RING finger domain, C3HC4 (zinc finger)"/>
    <property type="match status" value="1"/>
</dbReference>
<dbReference type="InterPro" id="IPR011364">
    <property type="entry name" value="BRCA1"/>
</dbReference>
<dbReference type="InterPro" id="IPR031099">
    <property type="entry name" value="BRCA1-associated"/>
</dbReference>
<dbReference type="InterPro" id="IPR025994">
    <property type="entry name" value="BRCA1_serine_dom"/>
</dbReference>
<dbReference type="InterPro" id="IPR001357">
    <property type="entry name" value="BRCT_dom"/>
</dbReference>
<dbReference type="InterPro" id="IPR036420">
    <property type="entry name" value="BRCT_dom_sf"/>
</dbReference>
<dbReference type="InterPro" id="IPR018957">
    <property type="entry name" value="Znf_C3HC4_RING-type"/>
</dbReference>
<dbReference type="InterPro" id="IPR001841">
    <property type="entry name" value="Znf_RING"/>
</dbReference>
<dbReference type="InterPro" id="IPR013083">
    <property type="entry name" value="Znf_RING/FYVE/PHD"/>
</dbReference>
<dbReference type="InterPro" id="IPR017907">
    <property type="entry name" value="Znf_RING_CS"/>
</dbReference>
<dbReference type="PANTHER" id="PTHR13763:SF0">
    <property type="entry name" value="BREAST CANCER TYPE 1 SUSCEPTIBILITY PROTEIN"/>
    <property type="match status" value="1"/>
</dbReference>
<dbReference type="PANTHER" id="PTHR13763">
    <property type="entry name" value="BREAST CANCER TYPE 1 SUSCEPTIBILITY PROTEIN BRCA1"/>
    <property type="match status" value="1"/>
</dbReference>
<dbReference type="Pfam" id="PF00533">
    <property type="entry name" value="BRCT"/>
    <property type="match status" value="2"/>
</dbReference>
<dbReference type="Pfam" id="PF12820">
    <property type="entry name" value="BRCT_assoc"/>
    <property type="match status" value="1"/>
</dbReference>
<dbReference type="Pfam" id="PF00097">
    <property type="entry name" value="zf-C3HC4"/>
    <property type="match status" value="1"/>
</dbReference>
<dbReference type="PIRSF" id="PIRSF001734">
    <property type="entry name" value="BRCA1"/>
    <property type="match status" value="1"/>
</dbReference>
<dbReference type="PRINTS" id="PR00493">
    <property type="entry name" value="BRSTCANCERI"/>
</dbReference>
<dbReference type="SMART" id="SM00292">
    <property type="entry name" value="BRCT"/>
    <property type="match status" value="2"/>
</dbReference>
<dbReference type="SMART" id="SM00184">
    <property type="entry name" value="RING"/>
    <property type="match status" value="1"/>
</dbReference>
<dbReference type="SUPFAM" id="SSF52113">
    <property type="entry name" value="BRCT domain"/>
    <property type="match status" value="2"/>
</dbReference>
<dbReference type="SUPFAM" id="SSF57850">
    <property type="entry name" value="RING/U-box"/>
    <property type="match status" value="1"/>
</dbReference>
<dbReference type="PROSITE" id="PS50172">
    <property type="entry name" value="BRCT"/>
    <property type="match status" value="2"/>
</dbReference>
<dbReference type="PROSITE" id="PS00518">
    <property type="entry name" value="ZF_RING_1"/>
    <property type="match status" value="1"/>
</dbReference>
<dbReference type="PROSITE" id="PS50089">
    <property type="entry name" value="ZF_RING_2"/>
    <property type="match status" value="1"/>
</dbReference>
<proteinExistence type="inferred from homology"/>
<organism>
    <name type="scientific">Pongo pygmaeus</name>
    <name type="common">Bornean orangutan</name>
    <dbReference type="NCBI Taxonomy" id="9600"/>
    <lineage>
        <taxon>Eukaryota</taxon>
        <taxon>Metazoa</taxon>
        <taxon>Chordata</taxon>
        <taxon>Craniata</taxon>
        <taxon>Vertebrata</taxon>
        <taxon>Euteleostomi</taxon>
        <taxon>Mammalia</taxon>
        <taxon>Eutheria</taxon>
        <taxon>Euarchontoglires</taxon>
        <taxon>Primates</taxon>
        <taxon>Haplorrhini</taxon>
        <taxon>Catarrhini</taxon>
        <taxon>Hominidae</taxon>
        <taxon>Pongo</taxon>
    </lineage>
</organism>
<comment type="function">
    <text evidence="2">E3 ubiquitin-protein ligase that specifically mediates the formation of 'Lys-6'-linked polyubiquitin chains and plays a central role in DNA repair by facilitating cellular responses to DNA damage. It is unclear whether it also mediates the formation of other types of polyubiquitin chains. The BRCA1-BARD1 heterodimer coordinates a diverse range of cellular pathways such as DNA damage repair, ubiquitination and transcriptional regulation to maintain genomic stability. Regulates centrosomal microtubule nucleation. Required for appropriate cell cycle arrests after ionizing irradiation in both the S-phase and the G2 phase of the cell cycle. Required for FANCD2 targeting to sites of DNA damage. Inhibits lipid synthesis by binding to inactive phosphorylated ACACA and preventing its dephosphorylation. Contributes to homologous recombination repair (HRR) via its direct interaction with PALB2, fine-tunes recombinational repair partly through its modulatory role in the PALB2-dependent loading of BRCA2-RAD51 repair machinery at DNA breaks. Component of the BRCA1-RBBP8 complex which regulates CHEK1 activation and controls cell cycle G2/M checkpoints on DNA damage via BRCA1-mediated ubiquitination of RBBP8. Acts as a transcriptional activator.</text>
</comment>
<comment type="catalytic activity">
    <reaction evidence="2">
        <text>S-ubiquitinyl-[E2 ubiquitin-conjugating enzyme]-L-cysteine + [acceptor protein]-L-lysine = [E2 ubiquitin-conjugating enzyme]-L-cysteine + N(6)-ubiquitinyl-[acceptor protein]-L-lysine.</text>
        <dbReference type="EC" id="2.3.2.27"/>
    </reaction>
</comment>
<comment type="pathway">
    <text>Protein modification; protein ubiquitination.</text>
</comment>
<comment type="subunit">
    <text evidence="2">Heterodimer with BARD1. Part of the BRCA1-associated genome surveillance complex (BASC), which contains BRCA1, MSH2, MSH6, MLH1, ATM, BLM, PMS2 and the MRE11-RAD50-NBN protein (MRN) complex. This association could be a dynamic process changing throughout the cell cycle and within subnuclear domains. Component of the BRCA1-A complex, at least composed of BRCA1, BARD1, UIMC1/RAP80, ABRAXAS1, BRCC3/BRCC36, BABAM2 and BABAM1/NBA1. Interacts (via the BRCT domains) with ABRAXAS1 (phosphorylated form); this is important for recruitment to sites of DNA damage. Can form a heterotetramer with two molecules of ABRAXAS1 (phosphorylated form). Component of the BRCA1-RBBP8 complex. Interacts (via the BRCT domains) with RBBP8 ('Ser-327' phosphorylated form); the interaction ubiquitinates RBBP8, regulates CHEK1 activation, and involves RBBP8 in BRCA1-dependent G2/M checkpoint control on DNA damage. Associates with RNA polymerase II holoenzyme. Interacts with SMC1A, NELFB, DCLRE1C, CLSPN. CHEK1, CHEK2, BAP1, BRCC3, UBXN1 and PCLAF. Interacts (via BRCT domains) with BRIP1 (phosphorylated form). Interacts with FANCD2 (ubiquitinated form). Interacts with H2AX (phosphorylated on 'Ser-140'). Interacts (via the BRCT domains) with ACACA (phosphorylated form); the interaction prevents dephosphorylation of ACACA. Part of a BRCA complex containing BRCA1, BRCA2 and PALB2. Interacts directly with PALB2; the interaction is essential for its function in HRR. Interacts directly with BRCA2; the interaction occurs only in the presence of PALB2 which serves as the bridging protein. Interacts (via the BRCT domains) with LMO4; the interaction represses the transcriptional activity of BRCA1. Interacts (via the BRCT domains) with CCAR2 (via N-terminus); the interaction represses the transcriptional activator activity of BRCA1 (By similarity). Interacts with EXD2 (By similarity). Interacts (via C-terminus) with DHX9; this interaction is direct and links BRCA1 to the RNA polymerase II holoenzyme (By similarity). Interacts with DNA helicase ZGRF1; the interaction is increased following DNA damage induction (By similarity).</text>
</comment>
<comment type="subcellular location">
    <subcellularLocation>
        <location evidence="2">Nucleus</location>
    </subcellularLocation>
    <subcellularLocation>
        <location evidence="3">Chromosome</location>
    </subcellularLocation>
    <subcellularLocation>
        <location evidence="2">Cytoplasm</location>
    </subcellularLocation>
    <text evidence="2">Localizes at sites of DNA damage at double-strand breaks (DSBs); recruitment to DNA damage sites is mediated by the BRCA1-A complex. Translocated to the cytoplasm during UV-induced apoptosis.</text>
</comment>
<comment type="domain">
    <text evidence="2">The BRCT domains recognize and bind phosphorylated pSXXF motif on proteins. The interaction with the phosphorylated pSXXF motif of ABRAXAS1, recruits BRCA1 at DNA damage sites.</text>
</comment>
<comment type="domain">
    <text evidence="2">The RING-type zinc finger domain interacts with BAP1.</text>
</comment>
<comment type="PTM">
    <text evidence="2">Phosphorylated in response to IR, UV, and various stimuli that cause checkpoint activation, probably by ATM or ATR. Phosphorylation at Ser-988 by CHEK2 regulates mitotic spindle assembly. Phosphorylation by AURKA regulates centrosomal microtubule nucleation.</text>
</comment>
<comment type="PTM">
    <text evidence="2">Autoubiquitinated, undergoes 'Lys-6'-linked polyubiquitination. 'Lys-6'-linked polyubiquitination does not promote degradation.</text>
</comment>
<protein>
    <recommendedName>
        <fullName>Breast cancer type 1 susceptibility protein homolog</fullName>
        <ecNumber evidence="2">2.3.2.27</ecNumber>
    </recommendedName>
    <alternativeName>
        <fullName evidence="7">RING-type E3 ubiquitin transferase BRCA1</fullName>
    </alternativeName>
</protein>
<accession>Q6J6J0</accession>
<accession>O46486</accession>